<organism>
    <name type="scientific">Bacillus anthracis</name>
    <dbReference type="NCBI Taxonomy" id="1392"/>
    <lineage>
        <taxon>Bacteria</taxon>
        <taxon>Bacillati</taxon>
        <taxon>Bacillota</taxon>
        <taxon>Bacilli</taxon>
        <taxon>Bacillales</taxon>
        <taxon>Bacillaceae</taxon>
        <taxon>Bacillus</taxon>
        <taxon>Bacillus cereus group</taxon>
    </lineage>
</organism>
<proteinExistence type="inferred from homology"/>
<comment type="function">
    <text evidence="1">Catalyzes the synthesis of GMP from XMP.</text>
</comment>
<comment type="catalytic activity">
    <reaction evidence="1">
        <text>XMP + L-glutamine + ATP + H2O = GMP + L-glutamate + AMP + diphosphate + 2 H(+)</text>
        <dbReference type="Rhea" id="RHEA:11680"/>
        <dbReference type="ChEBI" id="CHEBI:15377"/>
        <dbReference type="ChEBI" id="CHEBI:15378"/>
        <dbReference type="ChEBI" id="CHEBI:29985"/>
        <dbReference type="ChEBI" id="CHEBI:30616"/>
        <dbReference type="ChEBI" id="CHEBI:33019"/>
        <dbReference type="ChEBI" id="CHEBI:57464"/>
        <dbReference type="ChEBI" id="CHEBI:58115"/>
        <dbReference type="ChEBI" id="CHEBI:58359"/>
        <dbReference type="ChEBI" id="CHEBI:456215"/>
        <dbReference type="EC" id="6.3.5.2"/>
    </reaction>
</comment>
<comment type="pathway">
    <text evidence="1">Purine metabolism; GMP biosynthesis; GMP from XMP (L-Gln route): step 1/1.</text>
</comment>
<comment type="subunit">
    <text evidence="1">Homodimer.</text>
</comment>
<comment type="sequence caution" evidence="2">
    <conflict type="erroneous initiation">
        <sequence resource="EMBL-CDS" id="AAT52589"/>
    </conflict>
</comment>
<gene>
    <name evidence="1" type="primary">guaA</name>
    <name type="ordered locus">BA_0268</name>
    <name type="ordered locus">GBAA_0268</name>
    <name type="ordered locus">BAS0254</name>
</gene>
<accession>Q81VE0</accession>
<accession>Q6I4E2</accession>
<accession>Q6KY45</accession>
<name>GUAA_BACAN</name>
<sequence length="512" mass="57239">MKKQHDTIIVLDFGSQYNQLIARRIREFGVYSELHPHTITAEEIKAMNPKGIIFSGGPNSVYGEGALHCDEKIFDLGLPIFGICYGMQLMTQQFGGTVERANHREYGKAVLKVENESKLYANLPEEQVVWMSHGDLVTGLPEGFVVDATSESCPIAGMSNEAKNLYGVQFHPEVRHSEHGNDLIKNFVFGVCGCSEGWNMENFIEVELEKIRETVGDKKVLCALSGGVDSSVVAVLIHKAIGDQLTCIFVDHGLLRKGEAEGVMKTFSEGFHMNVIKVDAKERFMNKLKGVEDPEQKRKIIGNEFIYVFDDEASKLEGMDFLAQGTLYTDIVESGTATAQTIKSHHNVGGLPEDMQFKLIEPLNTLFKDEVRVLGSELGIPDEIVWRQPFPGPGLGIRVLGEITEEKLEIVRESDAILREEIIKAGLDREIWQYFTALPGMRSVGVMGDERTYDYTVGIRAVTSIDGMTADWARIPWDVLEKISVRIVNEVKHVNRIVYDVTSKPPATIEWE</sequence>
<keyword id="KW-0067">ATP-binding</keyword>
<keyword id="KW-0315">Glutamine amidotransferase</keyword>
<keyword id="KW-0332">GMP biosynthesis</keyword>
<keyword id="KW-0436">Ligase</keyword>
<keyword id="KW-0547">Nucleotide-binding</keyword>
<keyword id="KW-0658">Purine biosynthesis</keyword>
<keyword id="KW-1185">Reference proteome</keyword>
<feature type="chain" id="PRO_0000140089" description="GMP synthase [glutamine-hydrolyzing]">
    <location>
        <begin position="1"/>
        <end position="512"/>
    </location>
</feature>
<feature type="domain" description="Glutamine amidotransferase type-1" evidence="1">
    <location>
        <begin position="7"/>
        <end position="197"/>
    </location>
</feature>
<feature type="domain" description="GMPS ATP-PPase" evidence="1">
    <location>
        <begin position="198"/>
        <end position="387"/>
    </location>
</feature>
<feature type="active site" description="Nucleophile" evidence="1">
    <location>
        <position position="84"/>
    </location>
</feature>
<feature type="active site" evidence="1">
    <location>
        <position position="171"/>
    </location>
</feature>
<feature type="active site" evidence="1">
    <location>
        <position position="173"/>
    </location>
</feature>
<feature type="binding site" evidence="1">
    <location>
        <begin position="225"/>
        <end position="231"/>
    </location>
    <ligand>
        <name>ATP</name>
        <dbReference type="ChEBI" id="CHEBI:30616"/>
    </ligand>
</feature>
<protein>
    <recommendedName>
        <fullName evidence="1">GMP synthase [glutamine-hydrolyzing]</fullName>
        <ecNumber evidence="1">6.3.5.2</ecNumber>
    </recommendedName>
    <alternativeName>
        <fullName evidence="1">GMP synthetase</fullName>
    </alternativeName>
    <alternativeName>
        <fullName evidence="1">Glutamine amidotransferase</fullName>
    </alternativeName>
</protein>
<evidence type="ECO:0000255" key="1">
    <source>
        <dbReference type="HAMAP-Rule" id="MF_00344"/>
    </source>
</evidence>
<evidence type="ECO:0000305" key="2"/>
<dbReference type="EC" id="6.3.5.2" evidence="1"/>
<dbReference type="EMBL" id="AE016879">
    <property type="protein sequence ID" value="AAP24307.1"/>
    <property type="molecule type" value="Genomic_DNA"/>
</dbReference>
<dbReference type="EMBL" id="AE017334">
    <property type="protein sequence ID" value="AAT29352.2"/>
    <property type="molecule type" value="Genomic_DNA"/>
</dbReference>
<dbReference type="EMBL" id="AE017225">
    <property type="protein sequence ID" value="AAT52589.1"/>
    <property type="status" value="ALT_INIT"/>
    <property type="molecule type" value="Genomic_DNA"/>
</dbReference>
<dbReference type="RefSeq" id="NP_842821.1">
    <property type="nucleotide sequence ID" value="NC_003997.3"/>
</dbReference>
<dbReference type="RefSeq" id="WP_000743900.1">
    <property type="nucleotide sequence ID" value="NZ_VTZL01000013.1"/>
</dbReference>
<dbReference type="SMR" id="Q81VE0"/>
<dbReference type="IntAct" id="Q81VE0">
    <property type="interactions" value="2"/>
</dbReference>
<dbReference type="STRING" id="261594.GBAA_0268"/>
<dbReference type="MEROPS" id="C26.957"/>
<dbReference type="DNASU" id="1084286"/>
<dbReference type="GeneID" id="93010769"/>
<dbReference type="KEGG" id="ban:BA_0268"/>
<dbReference type="KEGG" id="bar:GBAA_0268"/>
<dbReference type="KEGG" id="bat:BAS0254"/>
<dbReference type="PATRIC" id="fig|198094.11.peg.261"/>
<dbReference type="eggNOG" id="COG0518">
    <property type="taxonomic scope" value="Bacteria"/>
</dbReference>
<dbReference type="eggNOG" id="COG0519">
    <property type="taxonomic scope" value="Bacteria"/>
</dbReference>
<dbReference type="HOGENOM" id="CLU_014340_0_5_9"/>
<dbReference type="OMA" id="IWQSFAV"/>
<dbReference type="OrthoDB" id="9802219at2"/>
<dbReference type="UniPathway" id="UPA00189">
    <property type="reaction ID" value="UER00296"/>
</dbReference>
<dbReference type="Proteomes" id="UP000000427">
    <property type="component" value="Chromosome"/>
</dbReference>
<dbReference type="Proteomes" id="UP000000594">
    <property type="component" value="Chromosome"/>
</dbReference>
<dbReference type="GO" id="GO:0005829">
    <property type="term" value="C:cytosol"/>
    <property type="evidence" value="ECO:0007669"/>
    <property type="project" value="TreeGrafter"/>
</dbReference>
<dbReference type="GO" id="GO:0005524">
    <property type="term" value="F:ATP binding"/>
    <property type="evidence" value="ECO:0007669"/>
    <property type="project" value="UniProtKB-UniRule"/>
</dbReference>
<dbReference type="GO" id="GO:0003921">
    <property type="term" value="F:GMP synthase activity"/>
    <property type="evidence" value="ECO:0007669"/>
    <property type="project" value="InterPro"/>
</dbReference>
<dbReference type="CDD" id="cd01742">
    <property type="entry name" value="GATase1_GMP_Synthase"/>
    <property type="match status" value="1"/>
</dbReference>
<dbReference type="CDD" id="cd01997">
    <property type="entry name" value="GMP_synthase_C"/>
    <property type="match status" value="1"/>
</dbReference>
<dbReference type="FunFam" id="3.30.300.10:FF:000002">
    <property type="entry name" value="GMP synthase [glutamine-hydrolyzing]"/>
    <property type="match status" value="1"/>
</dbReference>
<dbReference type="FunFam" id="3.40.50.620:FF:000001">
    <property type="entry name" value="GMP synthase [glutamine-hydrolyzing]"/>
    <property type="match status" value="1"/>
</dbReference>
<dbReference type="FunFam" id="3.40.50.880:FF:000001">
    <property type="entry name" value="GMP synthase [glutamine-hydrolyzing]"/>
    <property type="match status" value="1"/>
</dbReference>
<dbReference type="Gene3D" id="3.30.300.10">
    <property type="match status" value="1"/>
</dbReference>
<dbReference type="Gene3D" id="3.40.50.880">
    <property type="match status" value="1"/>
</dbReference>
<dbReference type="Gene3D" id="3.40.50.620">
    <property type="entry name" value="HUPs"/>
    <property type="match status" value="1"/>
</dbReference>
<dbReference type="HAMAP" id="MF_00344">
    <property type="entry name" value="GMP_synthase"/>
    <property type="match status" value="1"/>
</dbReference>
<dbReference type="InterPro" id="IPR029062">
    <property type="entry name" value="Class_I_gatase-like"/>
</dbReference>
<dbReference type="InterPro" id="IPR017926">
    <property type="entry name" value="GATASE"/>
</dbReference>
<dbReference type="InterPro" id="IPR001674">
    <property type="entry name" value="GMP_synth_C"/>
</dbReference>
<dbReference type="InterPro" id="IPR004739">
    <property type="entry name" value="GMP_synth_GATase"/>
</dbReference>
<dbReference type="InterPro" id="IPR022955">
    <property type="entry name" value="GMP_synthase"/>
</dbReference>
<dbReference type="InterPro" id="IPR025777">
    <property type="entry name" value="GMPS_ATP_PPase_dom"/>
</dbReference>
<dbReference type="InterPro" id="IPR022310">
    <property type="entry name" value="NAD/GMP_synthase"/>
</dbReference>
<dbReference type="InterPro" id="IPR014729">
    <property type="entry name" value="Rossmann-like_a/b/a_fold"/>
</dbReference>
<dbReference type="NCBIfam" id="TIGR00884">
    <property type="entry name" value="guaA_Cterm"/>
    <property type="match status" value="1"/>
</dbReference>
<dbReference type="NCBIfam" id="TIGR00888">
    <property type="entry name" value="guaA_Nterm"/>
    <property type="match status" value="1"/>
</dbReference>
<dbReference type="NCBIfam" id="NF000848">
    <property type="entry name" value="PRK00074.1"/>
    <property type="match status" value="1"/>
</dbReference>
<dbReference type="PANTHER" id="PTHR11922:SF2">
    <property type="entry name" value="GMP SYNTHASE [GLUTAMINE-HYDROLYZING]"/>
    <property type="match status" value="1"/>
</dbReference>
<dbReference type="PANTHER" id="PTHR11922">
    <property type="entry name" value="GMP SYNTHASE-RELATED"/>
    <property type="match status" value="1"/>
</dbReference>
<dbReference type="Pfam" id="PF00117">
    <property type="entry name" value="GATase"/>
    <property type="match status" value="1"/>
</dbReference>
<dbReference type="Pfam" id="PF00958">
    <property type="entry name" value="GMP_synt_C"/>
    <property type="match status" value="1"/>
</dbReference>
<dbReference type="Pfam" id="PF02540">
    <property type="entry name" value="NAD_synthase"/>
    <property type="match status" value="1"/>
</dbReference>
<dbReference type="PRINTS" id="PR00097">
    <property type="entry name" value="ANTSNTHASEII"/>
</dbReference>
<dbReference type="PRINTS" id="PR00099">
    <property type="entry name" value="CPSGATASE"/>
</dbReference>
<dbReference type="PRINTS" id="PR00096">
    <property type="entry name" value="GATASE"/>
</dbReference>
<dbReference type="SUPFAM" id="SSF52402">
    <property type="entry name" value="Adenine nucleotide alpha hydrolases-like"/>
    <property type="match status" value="1"/>
</dbReference>
<dbReference type="SUPFAM" id="SSF52317">
    <property type="entry name" value="Class I glutamine amidotransferase-like"/>
    <property type="match status" value="1"/>
</dbReference>
<dbReference type="SUPFAM" id="SSF54810">
    <property type="entry name" value="GMP synthetase C-terminal dimerisation domain"/>
    <property type="match status" value="1"/>
</dbReference>
<dbReference type="PROSITE" id="PS51273">
    <property type="entry name" value="GATASE_TYPE_1"/>
    <property type="match status" value="1"/>
</dbReference>
<dbReference type="PROSITE" id="PS51553">
    <property type="entry name" value="GMPS_ATP_PPASE"/>
    <property type="match status" value="1"/>
</dbReference>
<reference key="1">
    <citation type="journal article" date="2003" name="Nature">
        <title>The genome sequence of Bacillus anthracis Ames and comparison to closely related bacteria.</title>
        <authorList>
            <person name="Read T.D."/>
            <person name="Peterson S.N."/>
            <person name="Tourasse N.J."/>
            <person name="Baillie L.W."/>
            <person name="Paulsen I.T."/>
            <person name="Nelson K.E."/>
            <person name="Tettelin H."/>
            <person name="Fouts D.E."/>
            <person name="Eisen J.A."/>
            <person name="Gill S.R."/>
            <person name="Holtzapple E.K."/>
            <person name="Okstad O.A."/>
            <person name="Helgason E."/>
            <person name="Rilstone J."/>
            <person name="Wu M."/>
            <person name="Kolonay J.F."/>
            <person name="Beanan M.J."/>
            <person name="Dodson R.J."/>
            <person name="Brinkac L.M."/>
            <person name="Gwinn M.L."/>
            <person name="DeBoy R.T."/>
            <person name="Madpu R."/>
            <person name="Daugherty S.C."/>
            <person name="Durkin A.S."/>
            <person name="Haft D.H."/>
            <person name="Nelson W.C."/>
            <person name="Peterson J.D."/>
            <person name="Pop M."/>
            <person name="Khouri H.M."/>
            <person name="Radune D."/>
            <person name="Benton J.L."/>
            <person name="Mahamoud Y."/>
            <person name="Jiang L."/>
            <person name="Hance I.R."/>
            <person name="Weidman J.F."/>
            <person name="Berry K.J."/>
            <person name="Plaut R.D."/>
            <person name="Wolf A.M."/>
            <person name="Watkins K.L."/>
            <person name="Nierman W.C."/>
            <person name="Hazen A."/>
            <person name="Cline R.T."/>
            <person name="Redmond C."/>
            <person name="Thwaite J.E."/>
            <person name="White O."/>
            <person name="Salzberg S.L."/>
            <person name="Thomason B."/>
            <person name="Friedlander A.M."/>
            <person name="Koehler T.M."/>
            <person name="Hanna P.C."/>
            <person name="Kolstoe A.-B."/>
            <person name="Fraser C.M."/>
        </authorList>
    </citation>
    <scope>NUCLEOTIDE SEQUENCE [LARGE SCALE GENOMIC DNA]</scope>
    <source>
        <strain>Ames / isolate Porton</strain>
    </source>
</reference>
<reference key="2">
    <citation type="journal article" date="2009" name="J. Bacteriol.">
        <title>The complete genome sequence of Bacillus anthracis Ames 'Ancestor'.</title>
        <authorList>
            <person name="Ravel J."/>
            <person name="Jiang L."/>
            <person name="Stanley S.T."/>
            <person name="Wilson M.R."/>
            <person name="Decker R.S."/>
            <person name="Read T.D."/>
            <person name="Worsham P."/>
            <person name="Keim P.S."/>
            <person name="Salzberg S.L."/>
            <person name="Fraser-Liggett C.M."/>
            <person name="Rasko D.A."/>
        </authorList>
    </citation>
    <scope>NUCLEOTIDE SEQUENCE [LARGE SCALE GENOMIC DNA]</scope>
    <source>
        <strain>Ames ancestor</strain>
    </source>
</reference>
<reference key="3">
    <citation type="submission" date="2004-01" db="EMBL/GenBank/DDBJ databases">
        <title>Complete genome sequence of Bacillus anthracis Sterne.</title>
        <authorList>
            <person name="Brettin T.S."/>
            <person name="Bruce D."/>
            <person name="Challacombe J.F."/>
            <person name="Gilna P."/>
            <person name="Han C."/>
            <person name="Hill K."/>
            <person name="Hitchcock P."/>
            <person name="Jackson P."/>
            <person name="Keim P."/>
            <person name="Longmire J."/>
            <person name="Lucas S."/>
            <person name="Okinaka R."/>
            <person name="Richardson P."/>
            <person name="Rubin E."/>
            <person name="Tice H."/>
        </authorList>
    </citation>
    <scope>NUCLEOTIDE SEQUENCE [LARGE SCALE GENOMIC DNA]</scope>
    <source>
        <strain>Sterne</strain>
    </source>
</reference>